<evidence type="ECO:0000255" key="1">
    <source>
        <dbReference type="HAMAP-Rule" id="MF_00249"/>
    </source>
</evidence>
<dbReference type="EMBL" id="CP001011">
    <property type="protein sequence ID" value="ACB92179.1"/>
    <property type="molecule type" value="Genomic_DNA"/>
</dbReference>
<dbReference type="RefSeq" id="WP_004089043.1">
    <property type="nucleotide sequence ID" value="NC_010577.1"/>
</dbReference>
<dbReference type="SMR" id="B2IA20"/>
<dbReference type="GeneID" id="93904482"/>
<dbReference type="KEGG" id="xfn:XfasM23_0738"/>
<dbReference type="HOGENOM" id="CLU_033123_0_0_6"/>
<dbReference type="Proteomes" id="UP000001698">
    <property type="component" value="Chromosome"/>
</dbReference>
<dbReference type="GO" id="GO:0009376">
    <property type="term" value="C:HslUV protease complex"/>
    <property type="evidence" value="ECO:0007669"/>
    <property type="project" value="UniProtKB-UniRule"/>
</dbReference>
<dbReference type="GO" id="GO:0005524">
    <property type="term" value="F:ATP binding"/>
    <property type="evidence" value="ECO:0007669"/>
    <property type="project" value="UniProtKB-UniRule"/>
</dbReference>
<dbReference type="GO" id="GO:0016887">
    <property type="term" value="F:ATP hydrolysis activity"/>
    <property type="evidence" value="ECO:0007669"/>
    <property type="project" value="InterPro"/>
</dbReference>
<dbReference type="GO" id="GO:0008233">
    <property type="term" value="F:peptidase activity"/>
    <property type="evidence" value="ECO:0007669"/>
    <property type="project" value="InterPro"/>
</dbReference>
<dbReference type="GO" id="GO:0036402">
    <property type="term" value="F:proteasome-activating activity"/>
    <property type="evidence" value="ECO:0007669"/>
    <property type="project" value="UniProtKB-UniRule"/>
</dbReference>
<dbReference type="GO" id="GO:0043335">
    <property type="term" value="P:protein unfolding"/>
    <property type="evidence" value="ECO:0007669"/>
    <property type="project" value="UniProtKB-UniRule"/>
</dbReference>
<dbReference type="GO" id="GO:0051603">
    <property type="term" value="P:proteolysis involved in protein catabolic process"/>
    <property type="evidence" value="ECO:0007669"/>
    <property type="project" value="TreeGrafter"/>
</dbReference>
<dbReference type="CDD" id="cd19498">
    <property type="entry name" value="RecA-like_HslU"/>
    <property type="match status" value="1"/>
</dbReference>
<dbReference type="FunFam" id="3.40.50.300:FF:000213">
    <property type="entry name" value="ATP-dependent protease ATPase subunit HslU"/>
    <property type="match status" value="1"/>
</dbReference>
<dbReference type="FunFam" id="3.40.50.300:FF:000220">
    <property type="entry name" value="ATP-dependent protease ATPase subunit HslU"/>
    <property type="match status" value="1"/>
</dbReference>
<dbReference type="Gene3D" id="1.10.8.60">
    <property type="match status" value="1"/>
</dbReference>
<dbReference type="Gene3D" id="1.10.8.10">
    <property type="entry name" value="DNA helicase RuvA subunit, C-terminal domain"/>
    <property type="match status" value="1"/>
</dbReference>
<dbReference type="Gene3D" id="3.40.50.300">
    <property type="entry name" value="P-loop containing nucleotide triphosphate hydrolases"/>
    <property type="match status" value="2"/>
</dbReference>
<dbReference type="HAMAP" id="MF_00249">
    <property type="entry name" value="HslU"/>
    <property type="match status" value="1"/>
</dbReference>
<dbReference type="InterPro" id="IPR003593">
    <property type="entry name" value="AAA+_ATPase"/>
</dbReference>
<dbReference type="InterPro" id="IPR050052">
    <property type="entry name" value="ATP-dep_Clp_protease_ClpX"/>
</dbReference>
<dbReference type="InterPro" id="IPR003959">
    <property type="entry name" value="ATPase_AAA_core"/>
</dbReference>
<dbReference type="InterPro" id="IPR019489">
    <property type="entry name" value="Clp_ATPase_C"/>
</dbReference>
<dbReference type="InterPro" id="IPR004491">
    <property type="entry name" value="HslU"/>
</dbReference>
<dbReference type="InterPro" id="IPR027417">
    <property type="entry name" value="P-loop_NTPase"/>
</dbReference>
<dbReference type="NCBIfam" id="TIGR00390">
    <property type="entry name" value="hslU"/>
    <property type="match status" value="1"/>
</dbReference>
<dbReference type="NCBIfam" id="NF003544">
    <property type="entry name" value="PRK05201.1"/>
    <property type="match status" value="1"/>
</dbReference>
<dbReference type="PANTHER" id="PTHR48102">
    <property type="entry name" value="ATP-DEPENDENT CLP PROTEASE ATP-BINDING SUBUNIT CLPX-LIKE, MITOCHONDRIAL-RELATED"/>
    <property type="match status" value="1"/>
</dbReference>
<dbReference type="PANTHER" id="PTHR48102:SF3">
    <property type="entry name" value="ATP-DEPENDENT PROTEASE ATPASE SUBUNIT HSLU"/>
    <property type="match status" value="1"/>
</dbReference>
<dbReference type="Pfam" id="PF00004">
    <property type="entry name" value="AAA"/>
    <property type="match status" value="1"/>
</dbReference>
<dbReference type="Pfam" id="PF07724">
    <property type="entry name" value="AAA_2"/>
    <property type="match status" value="1"/>
</dbReference>
<dbReference type="Pfam" id="PF10431">
    <property type="entry name" value="ClpB_D2-small"/>
    <property type="match status" value="1"/>
</dbReference>
<dbReference type="SMART" id="SM00382">
    <property type="entry name" value="AAA"/>
    <property type="match status" value="1"/>
</dbReference>
<dbReference type="SMART" id="SM01086">
    <property type="entry name" value="ClpB_D2-small"/>
    <property type="match status" value="1"/>
</dbReference>
<dbReference type="SUPFAM" id="SSF52540">
    <property type="entry name" value="P-loop containing nucleoside triphosphate hydrolases"/>
    <property type="match status" value="1"/>
</dbReference>
<feature type="chain" id="PRO_1000100983" description="ATP-dependent protease ATPase subunit HslU">
    <location>
        <begin position="1"/>
        <end position="459"/>
    </location>
</feature>
<feature type="binding site" evidence="1">
    <location>
        <position position="26"/>
    </location>
    <ligand>
        <name>ATP</name>
        <dbReference type="ChEBI" id="CHEBI:30616"/>
    </ligand>
</feature>
<feature type="binding site" evidence="1">
    <location>
        <begin position="68"/>
        <end position="73"/>
    </location>
    <ligand>
        <name>ATP</name>
        <dbReference type="ChEBI" id="CHEBI:30616"/>
    </ligand>
</feature>
<feature type="binding site" evidence="1">
    <location>
        <position position="271"/>
    </location>
    <ligand>
        <name>ATP</name>
        <dbReference type="ChEBI" id="CHEBI:30616"/>
    </ligand>
</feature>
<feature type="binding site" evidence="1">
    <location>
        <position position="337"/>
    </location>
    <ligand>
        <name>ATP</name>
        <dbReference type="ChEBI" id="CHEBI:30616"/>
    </ligand>
</feature>
<feature type="binding site" evidence="1">
    <location>
        <position position="409"/>
    </location>
    <ligand>
        <name>ATP</name>
        <dbReference type="ChEBI" id="CHEBI:30616"/>
    </ligand>
</feature>
<proteinExistence type="inferred from homology"/>
<comment type="function">
    <text evidence="1">ATPase subunit of a proteasome-like degradation complex; this subunit has chaperone activity. The binding of ATP and its subsequent hydrolysis by HslU are essential for unfolding of protein substrates subsequently hydrolyzed by HslV. HslU recognizes the N-terminal part of its protein substrates and unfolds these before they are guided to HslV for hydrolysis.</text>
</comment>
<comment type="subunit">
    <text evidence="1">A double ring-shaped homohexamer of HslV is capped on each side by a ring-shaped HslU homohexamer. The assembly of the HslU/HslV complex is dependent on binding of ATP.</text>
</comment>
<comment type="subcellular location">
    <subcellularLocation>
        <location evidence="1">Cytoplasm</location>
    </subcellularLocation>
</comment>
<comment type="similarity">
    <text evidence="1">Belongs to the ClpX chaperone family. HslU subfamily.</text>
</comment>
<reference key="1">
    <citation type="journal article" date="2010" name="J. Bacteriol.">
        <title>Whole genome sequences of two Xylella fastidiosa strains (M12 and M23) causing almond leaf scorch disease in California.</title>
        <authorList>
            <person name="Chen J."/>
            <person name="Xie G."/>
            <person name="Han S."/>
            <person name="Chertkov O."/>
            <person name="Sims D."/>
            <person name="Civerolo E.L."/>
        </authorList>
    </citation>
    <scope>NUCLEOTIDE SEQUENCE [LARGE SCALE GENOMIC DNA]</scope>
    <source>
        <strain>M23</strain>
    </source>
</reference>
<organism>
    <name type="scientific">Xylella fastidiosa (strain M23)</name>
    <dbReference type="NCBI Taxonomy" id="405441"/>
    <lineage>
        <taxon>Bacteria</taxon>
        <taxon>Pseudomonadati</taxon>
        <taxon>Pseudomonadota</taxon>
        <taxon>Gammaproteobacteria</taxon>
        <taxon>Lysobacterales</taxon>
        <taxon>Lysobacteraceae</taxon>
        <taxon>Xylella</taxon>
    </lineage>
</organism>
<accession>B2IA20</accession>
<protein>
    <recommendedName>
        <fullName evidence="1">ATP-dependent protease ATPase subunit HslU</fullName>
    </recommendedName>
    <alternativeName>
        <fullName evidence="1">Unfoldase HslU</fullName>
    </alternativeName>
</protein>
<keyword id="KW-0067">ATP-binding</keyword>
<keyword id="KW-0143">Chaperone</keyword>
<keyword id="KW-0963">Cytoplasm</keyword>
<keyword id="KW-0547">Nucleotide-binding</keyword>
<keyword id="KW-0346">Stress response</keyword>
<name>HSLU_XYLF2</name>
<sequence length="459" mass="51489">MPSKTDFTSSTMTPREIVQELDRHIVGQQAAKRSVAIALRNRWRRMQLPEELRNEVMPKNILMIGPTGVGKTEIARRLATLANAPFVKVEATRFTEVGYVGKDVEQIGRDLVDTAVKMYREQAKVRVRTQAEEYAEERILDALLPRRSVGIGFDADADAIRQEPSAHESETRAKFRRMLRSGELEEREIELDVAVNVSMDIMTPPGMEEMGQQLRQMFSNIGGGKSQKRKLAIKAARPLLIEEEAAKLVNEDEIRAAAIEACEQNGIVFIDEIDKVVKRGDTVGGGDVSREGVQRDLLPLVEGSNVSTKYGTIRTNHILFIASGAFHLTKPSDLIPELQGRFPIRVELDALSKADFIRILTEPKAALTKQYQELLKTEGVSLDFTEDAIDRIAEIAYLVNERQENIGARRLHTVLERLLETLSYESPDRDGESVTVDADYVNAHLGELVKDPDLSRYIL</sequence>
<gene>
    <name evidence="1" type="primary">hslU</name>
    <name type="ordered locus">XfasM23_0738</name>
</gene>